<reference key="1">
    <citation type="journal article" date="2000" name="Nature">
        <title>The genome sequence of the plant pathogen Xylella fastidiosa.</title>
        <authorList>
            <person name="Simpson A.J.G."/>
            <person name="Reinach F.C."/>
            <person name="Arruda P."/>
            <person name="Abreu F.A."/>
            <person name="Acencio M."/>
            <person name="Alvarenga R."/>
            <person name="Alves L.M.C."/>
            <person name="Araya J.E."/>
            <person name="Baia G.S."/>
            <person name="Baptista C.S."/>
            <person name="Barros M.H."/>
            <person name="Bonaccorsi E.D."/>
            <person name="Bordin S."/>
            <person name="Bove J.M."/>
            <person name="Briones M.R.S."/>
            <person name="Bueno M.R.P."/>
            <person name="Camargo A.A."/>
            <person name="Camargo L.E.A."/>
            <person name="Carraro D.M."/>
            <person name="Carrer H."/>
            <person name="Colauto N.B."/>
            <person name="Colombo C."/>
            <person name="Costa F.F."/>
            <person name="Costa M.C.R."/>
            <person name="Costa-Neto C.M."/>
            <person name="Coutinho L.L."/>
            <person name="Cristofani M."/>
            <person name="Dias-Neto E."/>
            <person name="Docena C."/>
            <person name="El-Dorry H."/>
            <person name="Facincani A.P."/>
            <person name="Ferreira A.J.S."/>
            <person name="Ferreira V.C.A."/>
            <person name="Ferro J.A."/>
            <person name="Fraga J.S."/>
            <person name="Franca S.C."/>
            <person name="Franco M.C."/>
            <person name="Frohme M."/>
            <person name="Furlan L.R."/>
            <person name="Garnier M."/>
            <person name="Goldman G.H."/>
            <person name="Goldman M.H.S."/>
            <person name="Gomes S.L."/>
            <person name="Gruber A."/>
            <person name="Ho P.L."/>
            <person name="Hoheisel J.D."/>
            <person name="Junqueira M.L."/>
            <person name="Kemper E.L."/>
            <person name="Kitajima J.P."/>
            <person name="Krieger J.E."/>
            <person name="Kuramae E.E."/>
            <person name="Laigret F."/>
            <person name="Lambais M.R."/>
            <person name="Leite L.C.C."/>
            <person name="Lemos E.G.M."/>
            <person name="Lemos M.V.F."/>
            <person name="Lopes S.A."/>
            <person name="Lopes C.R."/>
            <person name="Machado J.A."/>
            <person name="Machado M.A."/>
            <person name="Madeira A.M.B.N."/>
            <person name="Madeira H.M.F."/>
            <person name="Marino C.L."/>
            <person name="Marques M.V."/>
            <person name="Martins E.A.L."/>
            <person name="Martins E.M.F."/>
            <person name="Matsukuma A.Y."/>
            <person name="Menck C.F.M."/>
            <person name="Miracca E.C."/>
            <person name="Miyaki C.Y."/>
            <person name="Monteiro-Vitorello C.B."/>
            <person name="Moon D.H."/>
            <person name="Nagai M.A."/>
            <person name="Nascimento A.L.T.O."/>
            <person name="Netto L.E.S."/>
            <person name="Nhani A. Jr."/>
            <person name="Nobrega F.G."/>
            <person name="Nunes L.R."/>
            <person name="Oliveira M.A."/>
            <person name="de Oliveira M.C."/>
            <person name="de Oliveira R.C."/>
            <person name="Palmieri D.A."/>
            <person name="Paris A."/>
            <person name="Peixoto B.R."/>
            <person name="Pereira G.A.G."/>
            <person name="Pereira H.A. Jr."/>
            <person name="Pesquero J.B."/>
            <person name="Quaggio R.B."/>
            <person name="Roberto P.G."/>
            <person name="Rodrigues V."/>
            <person name="de Rosa A.J.M."/>
            <person name="de Rosa V.E. Jr."/>
            <person name="de Sa R.G."/>
            <person name="Santelli R.V."/>
            <person name="Sawasaki H.E."/>
            <person name="da Silva A.C.R."/>
            <person name="da Silva A.M."/>
            <person name="da Silva F.R."/>
            <person name="Silva W.A. Jr."/>
            <person name="da Silveira J.F."/>
            <person name="Silvestri M.L.Z."/>
            <person name="Siqueira W.J."/>
            <person name="de Souza A.A."/>
            <person name="de Souza A.P."/>
            <person name="Terenzi M.F."/>
            <person name="Truffi D."/>
            <person name="Tsai S.M."/>
            <person name="Tsuhako M.H."/>
            <person name="Vallada H."/>
            <person name="Van Sluys M.A."/>
            <person name="Verjovski-Almeida S."/>
            <person name="Vettore A.L."/>
            <person name="Zago M.A."/>
            <person name="Zatz M."/>
            <person name="Meidanis J."/>
            <person name="Setubal J.C."/>
        </authorList>
    </citation>
    <scope>NUCLEOTIDE SEQUENCE [LARGE SCALE GENOMIC DNA]</scope>
    <source>
        <strain>9a5c</strain>
    </source>
</reference>
<keyword id="KW-0067">ATP-binding</keyword>
<keyword id="KW-0418">Kinase</keyword>
<keyword id="KW-0460">Magnesium</keyword>
<keyword id="KW-0479">Metal-binding</keyword>
<keyword id="KW-0547">Nucleotide-binding</keyword>
<keyword id="KW-0597">Phosphoprotein</keyword>
<keyword id="KW-0808">Transferase</keyword>
<proteinExistence type="inferred from homology"/>
<dbReference type="EC" id="2.7.4.1" evidence="1"/>
<dbReference type="EMBL" id="AE003849">
    <property type="protein sequence ID" value="AAF85388.1"/>
    <property type="molecule type" value="Genomic_DNA"/>
</dbReference>
<dbReference type="PIR" id="D82538">
    <property type="entry name" value="D82538"/>
</dbReference>
<dbReference type="SMR" id="Q9PAC7"/>
<dbReference type="STRING" id="160492.XF_2591"/>
<dbReference type="KEGG" id="xfa:XF_2591"/>
<dbReference type="eggNOG" id="COG0855">
    <property type="taxonomic scope" value="Bacteria"/>
</dbReference>
<dbReference type="HOGENOM" id="CLU_009678_5_0_6"/>
<dbReference type="Proteomes" id="UP000000812">
    <property type="component" value="Chromosome"/>
</dbReference>
<dbReference type="GO" id="GO:0009358">
    <property type="term" value="C:polyphosphate kinase complex"/>
    <property type="evidence" value="ECO:0007669"/>
    <property type="project" value="InterPro"/>
</dbReference>
<dbReference type="GO" id="GO:0005524">
    <property type="term" value="F:ATP binding"/>
    <property type="evidence" value="ECO:0007669"/>
    <property type="project" value="UniProtKB-KW"/>
</dbReference>
<dbReference type="GO" id="GO:0046872">
    <property type="term" value="F:metal ion binding"/>
    <property type="evidence" value="ECO:0007669"/>
    <property type="project" value="UniProtKB-KW"/>
</dbReference>
<dbReference type="GO" id="GO:0008976">
    <property type="term" value="F:polyphosphate kinase activity"/>
    <property type="evidence" value="ECO:0007669"/>
    <property type="project" value="UniProtKB-UniRule"/>
</dbReference>
<dbReference type="GO" id="GO:0006799">
    <property type="term" value="P:polyphosphate biosynthetic process"/>
    <property type="evidence" value="ECO:0007669"/>
    <property type="project" value="UniProtKB-UniRule"/>
</dbReference>
<dbReference type="CDD" id="cd09168">
    <property type="entry name" value="PLDc_PaPPK1_C2_like"/>
    <property type="match status" value="1"/>
</dbReference>
<dbReference type="Gene3D" id="3.30.870.10">
    <property type="entry name" value="Endonuclease Chain A"/>
    <property type="match status" value="2"/>
</dbReference>
<dbReference type="Gene3D" id="3.30.1840.10">
    <property type="entry name" value="Polyphosphate kinase middle domain"/>
    <property type="match status" value="1"/>
</dbReference>
<dbReference type="Gene3D" id="1.20.58.310">
    <property type="entry name" value="Polyphosphate kinase N-terminal domain"/>
    <property type="match status" value="1"/>
</dbReference>
<dbReference type="HAMAP" id="MF_00347">
    <property type="entry name" value="Polyphosphate_kinase"/>
    <property type="match status" value="1"/>
</dbReference>
<dbReference type="InterPro" id="IPR003414">
    <property type="entry name" value="PP_kinase"/>
</dbReference>
<dbReference type="InterPro" id="IPR041108">
    <property type="entry name" value="PP_kinase_C_1"/>
</dbReference>
<dbReference type="InterPro" id="IPR024953">
    <property type="entry name" value="PP_kinase_middle"/>
</dbReference>
<dbReference type="InterPro" id="IPR036830">
    <property type="entry name" value="PP_kinase_middle_dom_sf"/>
</dbReference>
<dbReference type="InterPro" id="IPR025200">
    <property type="entry name" value="PPK_C_dom2"/>
</dbReference>
<dbReference type="InterPro" id="IPR025198">
    <property type="entry name" value="PPK_N_dom"/>
</dbReference>
<dbReference type="InterPro" id="IPR036832">
    <property type="entry name" value="PPK_N_dom_sf"/>
</dbReference>
<dbReference type="NCBIfam" id="TIGR03705">
    <property type="entry name" value="poly_P_kin"/>
    <property type="match status" value="1"/>
</dbReference>
<dbReference type="NCBIfam" id="NF003917">
    <property type="entry name" value="PRK05443.1-1"/>
    <property type="match status" value="1"/>
</dbReference>
<dbReference type="NCBIfam" id="NF003918">
    <property type="entry name" value="PRK05443.1-2"/>
    <property type="match status" value="1"/>
</dbReference>
<dbReference type="NCBIfam" id="NF003921">
    <property type="entry name" value="PRK05443.2-2"/>
    <property type="match status" value="1"/>
</dbReference>
<dbReference type="PANTHER" id="PTHR30218">
    <property type="entry name" value="POLYPHOSPHATE KINASE"/>
    <property type="match status" value="1"/>
</dbReference>
<dbReference type="PANTHER" id="PTHR30218:SF0">
    <property type="entry name" value="POLYPHOSPHATE KINASE"/>
    <property type="match status" value="1"/>
</dbReference>
<dbReference type="Pfam" id="PF02503">
    <property type="entry name" value="PP_kinase"/>
    <property type="match status" value="1"/>
</dbReference>
<dbReference type="Pfam" id="PF13090">
    <property type="entry name" value="PP_kinase_C"/>
    <property type="match status" value="1"/>
</dbReference>
<dbReference type="Pfam" id="PF17941">
    <property type="entry name" value="PP_kinase_C_1"/>
    <property type="match status" value="1"/>
</dbReference>
<dbReference type="Pfam" id="PF13089">
    <property type="entry name" value="PP_kinase_N"/>
    <property type="match status" value="1"/>
</dbReference>
<dbReference type="PIRSF" id="PIRSF015589">
    <property type="entry name" value="PP_kinase"/>
    <property type="match status" value="1"/>
</dbReference>
<dbReference type="SUPFAM" id="SSF56024">
    <property type="entry name" value="Phospholipase D/nuclease"/>
    <property type="match status" value="2"/>
</dbReference>
<dbReference type="SUPFAM" id="SSF143724">
    <property type="entry name" value="PHP14-like"/>
    <property type="match status" value="1"/>
</dbReference>
<dbReference type="SUPFAM" id="SSF140356">
    <property type="entry name" value="PPK N-terminal domain-like"/>
    <property type="match status" value="1"/>
</dbReference>
<protein>
    <recommendedName>
        <fullName evidence="1">Polyphosphate kinase</fullName>
        <ecNumber evidence="1">2.7.4.1</ecNumber>
    </recommendedName>
    <alternativeName>
        <fullName evidence="1">ATP-polyphosphate phosphotransferase</fullName>
    </alternativeName>
    <alternativeName>
        <fullName evidence="1">Polyphosphoric acid kinase</fullName>
    </alternativeName>
</protein>
<name>PPK1_XYLFA</name>
<sequence>MSKSSPIEPVSASDVSQQFRDPGLYLNRELSQLDFNFRVLAQALDEQVPLLERLRFLCISCTNLDEFFEIRVATVRHAQEFGLPPAPDGMRPTVILNAVHDLTTKLVHDQYNCWNQVLCPALAALGVGVLSHNSWNARQKRWLRGYFRNEIMPVLSPLGLDPAHPFPKIFNKTLNIVVVLNGIDAFGRAGHLAIVRAPRSLPRIIELPQHLSRDGSQNFVFLSSVLSAFVGELFPGMVVRGAYQFRVTRNSELVVDEDEVENLALALRNELVTRGYRLAVRLEIAEDCPTPIVRTLLQNFGLQENAVYRINGPVNLSRVSQVYDMVLRPELKYPPFNPRTLRNSDHIFEIIAKGDVLLYHPYDAFTAVLDLLRQAAADPDVLAIKQTLYRTGKDSTIVDALIQAARSGKDVTVVVELRARFDEEANLGLADKLQEAGVQVVYGVVGYKTHAKMLLIVRREGRKLRRYVHLGTGNYHSGTARIYTDLSLMTANAAIGKDVHQLFLQLSGLAPKMKLECLLQSPFTLHAGVLFRIERETKFARKGRPARIVAKMNALNEPQVVRALYVASQAGVQIDLIVRGACTLRPGVQDISENIRVRSIVGRFLEHSRVYWFANNGTPELFCASADWLERNLLRRVEICFPILNPDLAKRIYSDVLQSYLDDNLNAWELGSDGVYRKLLPETDHAPYSAQVALLESL</sequence>
<comment type="function">
    <text evidence="1">Catalyzes the reversible transfer of the terminal phosphate of ATP to form a long-chain polyphosphate (polyP).</text>
</comment>
<comment type="catalytic activity">
    <reaction evidence="1">
        <text>[phosphate](n) + ATP = [phosphate](n+1) + ADP</text>
        <dbReference type="Rhea" id="RHEA:19573"/>
        <dbReference type="Rhea" id="RHEA-COMP:9859"/>
        <dbReference type="Rhea" id="RHEA-COMP:14280"/>
        <dbReference type="ChEBI" id="CHEBI:16838"/>
        <dbReference type="ChEBI" id="CHEBI:30616"/>
        <dbReference type="ChEBI" id="CHEBI:456216"/>
        <dbReference type="EC" id="2.7.4.1"/>
    </reaction>
</comment>
<comment type="cofactor">
    <cofactor evidence="1">
        <name>Mg(2+)</name>
        <dbReference type="ChEBI" id="CHEBI:18420"/>
    </cofactor>
</comment>
<comment type="PTM">
    <text evidence="1">An intermediate of this reaction is the autophosphorylated ppk in which a phosphate is covalently linked to a histidine residue through a N-P bond.</text>
</comment>
<comment type="similarity">
    <text evidence="1">Belongs to the polyphosphate kinase 1 (PPK1) family.</text>
</comment>
<gene>
    <name evidence="1" type="primary">ppk</name>
    <name type="ordered locus">XF_2591</name>
</gene>
<accession>Q9PAC7</accession>
<evidence type="ECO:0000255" key="1">
    <source>
        <dbReference type="HAMAP-Rule" id="MF_00347"/>
    </source>
</evidence>
<organism>
    <name type="scientific">Xylella fastidiosa (strain 9a5c)</name>
    <dbReference type="NCBI Taxonomy" id="160492"/>
    <lineage>
        <taxon>Bacteria</taxon>
        <taxon>Pseudomonadati</taxon>
        <taxon>Pseudomonadota</taxon>
        <taxon>Gammaproteobacteria</taxon>
        <taxon>Lysobacterales</taxon>
        <taxon>Lysobacteraceae</taxon>
        <taxon>Xylella</taxon>
    </lineage>
</organism>
<feature type="chain" id="PRO_0000128670" description="Polyphosphate kinase">
    <location>
        <begin position="1"/>
        <end position="698"/>
    </location>
</feature>
<feature type="active site" description="Phosphohistidine intermediate" evidence="1">
    <location>
        <position position="450"/>
    </location>
</feature>
<feature type="binding site" evidence="1">
    <location>
        <position position="63"/>
    </location>
    <ligand>
        <name>ATP</name>
        <dbReference type="ChEBI" id="CHEBI:30616"/>
    </ligand>
</feature>
<feature type="binding site" evidence="1">
    <location>
        <position position="390"/>
    </location>
    <ligand>
        <name>Mg(2+)</name>
        <dbReference type="ChEBI" id="CHEBI:18420"/>
    </ligand>
</feature>
<feature type="binding site" evidence="1">
    <location>
        <position position="420"/>
    </location>
    <ligand>
        <name>Mg(2+)</name>
        <dbReference type="ChEBI" id="CHEBI:18420"/>
    </ligand>
</feature>
<feature type="binding site" evidence="1">
    <location>
        <position position="483"/>
    </location>
    <ligand>
        <name>ATP</name>
        <dbReference type="ChEBI" id="CHEBI:30616"/>
    </ligand>
</feature>
<feature type="binding site" evidence="1">
    <location>
        <position position="579"/>
    </location>
    <ligand>
        <name>ATP</name>
        <dbReference type="ChEBI" id="CHEBI:30616"/>
    </ligand>
</feature>
<feature type="binding site" evidence="1">
    <location>
        <position position="607"/>
    </location>
    <ligand>
        <name>ATP</name>
        <dbReference type="ChEBI" id="CHEBI:30616"/>
    </ligand>
</feature>